<gene>
    <name evidence="2" type="primary">pyrR</name>
    <name type="ordered locus">SE_0873</name>
</gene>
<organism>
    <name type="scientific">Staphylococcus epidermidis (strain ATCC 12228 / FDA PCI 1200)</name>
    <dbReference type="NCBI Taxonomy" id="176280"/>
    <lineage>
        <taxon>Bacteria</taxon>
        <taxon>Bacillati</taxon>
        <taxon>Bacillota</taxon>
        <taxon>Bacilli</taxon>
        <taxon>Bacillales</taxon>
        <taxon>Staphylococcaceae</taxon>
        <taxon>Staphylococcus</taxon>
    </lineage>
</organism>
<comment type="function">
    <text evidence="2">Regulates transcriptional attenuation of the pyrimidine nucleotide (pyr) operon by binding in a uridine-dependent manner to specific sites on pyr mRNA. This disrupts an antiterminator hairpin in the RNA and favors formation of a downstream transcription terminator, leading to a reduced expression of downstream genes.</text>
</comment>
<comment type="function">
    <text evidence="2">Also displays a weak uracil phosphoribosyltransferase activity which is not physiologically significant.</text>
</comment>
<comment type="catalytic activity">
    <reaction evidence="2">
        <text>UMP + diphosphate = 5-phospho-alpha-D-ribose 1-diphosphate + uracil</text>
        <dbReference type="Rhea" id="RHEA:13017"/>
        <dbReference type="ChEBI" id="CHEBI:17568"/>
        <dbReference type="ChEBI" id="CHEBI:33019"/>
        <dbReference type="ChEBI" id="CHEBI:57865"/>
        <dbReference type="ChEBI" id="CHEBI:58017"/>
        <dbReference type="EC" id="2.4.2.9"/>
    </reaction>
</comment>
<comment type="subunit">
    <text evidence="2">Homodimer and homohexamer; in equilibrium.</text>
</comment>
<comment type="similarity">
    <text evidence="2">Belongs to the purine/pyrimidine phosphoribosyltransferase family. PyrR subfamily.</text>
</comment>
<accession>Q8CPJ9</accession>
<reference key="1">
    <citation type="journal article" date="2003" name="Mol. Microbiol.">
        <title>Genome-based analysis of virulence genes in a non-biofilm-forming Staphylococcus epidermidis strain (ATCC 12228).</title>
        <authorList>
            <person name="Zhang Y.-Q."/>
            <person name="Ren S.-X."/>
            <person name="Li H.-L."/>
            <person name="Wang Y.-X."/>
            <person name="Fu G."/>
            <person name="Yang J."/>
            <person name="Qin Z.-Q."/>
            <person name="Miao Y.-G."/>
            <person name="Wang W.-Y."/>
            <person name="Chen R.-S."/>
            <person name="Shen Y."/>
            <person name="Chen Z."/>
            <person name="Yuan Z.-H."/>
            <person name="Zhao G.-P."/>
            <person name="Qu D."/>
            <person name="Danchin A."/>
            <person name="Wen Y.-M."/>
        </authorList>
    </citation>
    <scope>NUCLEOTIDE SEQUENCE [LARGE SCALE GENOMIC DNA]</scope>
    <source>
        <strain>ATCC 12228 / FDA PCI 1200</strain>
    </source>
</reference>
<proteinExistence type="inferred from homology"/>
<keyword id="KW-0328">Glycosyltransferase</keyword>
<keyword id="KW-0694">RNA-binding</keyword>
<keyword id="KW-0804">Transcription</keyword>
<keyword id="KW-0805">Transcription regulation</keyword>
<keyword id="KW-0806">Transcription termination</keyword>
<keyword id="KW-0808">Transferase</keyword>
<dbReference type="EC" id="2.4.2.9" evidence="2"/>
<dbReference type="EMBL" id="AE015929">
    <property type="protein sequence ID" value="AAO04470.1"/>
    <property type="molecule type" value="Genomic_DNA"/>
</dbReference>
<dbReference type="RefSeq" id="NP_764428.1">
    <property type="nucleotide sequence ID" value="NC_004461.1"/>
</dbReference>
<dbReference type="RefSeq" id="WP_001830167.1">
    <property type="nucleotide sequence ID" value="NZ_WBME01000063.1"/>
</dbReference>
<dbReference type="SMR" id="Q8CPJ9"/>
<dbReference type="GeneID" id="50018988"/>
<dbReference type="KEGG" id="sep:SE_0873"/>
<dbReference type="PATRIC" id="fig|176280.10.peg.846"/>
<dbReference type="eggNOG" id="COG2065">
    <property type="taxonomic scope" value="Bacteria"/>
</dbReference>
<dbReference type="HOGENOM" id="CLU_094234_2_1_9"/>
<dbReference type="OrthoDB" id="9802227at2"/>
<dbReference type="Proteomes" id="UP000001411">
    <property type="component" value="Chromosome"/>
</dbReference>
<dbReference type="GO" id="GO:0003723">
    <property type="term" value="F:RNA binding"/>
    <property type="evidence" value="ECO:0007669"/>
    <property type="project" value="UniProtKB-UniRule"/>
</dbReference>
<dbReference type="GO" id="GO:0004845">
    <property type="term" value="F:uracil phosphoribosyltransferase activity"/>
    <property type="evidence" value="ECO:0007669"/>
    <property type="project" value="UniProtKB-UniRule"/>
</dbReference>
<dbReference type="GO" id="GO:0006353">
    <property type="term" value="P:DNA-templated transcription termination"/>
    <property type="evidence" value="ECO:0007669"/>
    <property type="project" value="UniProtKB-UniRule"/>
</dbReference>
<dbReference type="CDD" id="cd06223">
    <property type="entry name" value="PRTases_typeI"/>
    <property type="match status" value="1"/>
</dbReference>
<dbReference type="FunFam" id="3.40.50.2020:FF:000020">
    <property type="entry name" value="Bifunctional protein PyrR"/>
    <property type="match status" value="1"/>
</dbReference>
<dbReference type="Gene3D" id="3.40.50.2020">
    <property type="match status" value="1"/>
</dbReference>
<dbReference type="HAMAP" id="MF_01219">
    <property type="entry name" value="PyrR"/>
    <property type="match status" value="1"/>
</dbReference>
<dbReference type="InterPro" id="IPR000836">
    <property type="entry name" value="PRibTrfase_dom"/>
</dbReference>
<dbReference type="InterPro" id="IPR029057">
    <property type="entry name" value="PRTase-like"/>
</dbReference>
<dbReference type="InterPro" id="IPR023050">
    <property type="entry name" value="PyrR"/>
</dbReference>
<dbReference type="InterPro" id="IPR050137">
    <property type="entry name" value="PyrR_bifunctional"/>
</dbReference>
<dbReference type="NCBIfam" id="NF003546">
    <property type="entry name" value="PRK05205.1-2"/>
    <property type="match status" value="1"/>
</dbReference>
<dbReference type="NCBIfam" id="NF003548">
    <property type="entry name" value="PRK05205.1-4"/>
    <property type="match status" value="1"/>
</dbReference>
<dbReference type="NCBIfam" id="NF003549">
    <property type="entry name" value="PRK05205.1-5"/>
    <property type="match status" value="1"/>
</dbReference>
<dbReference type="PANTHER" id="PTHR11608">
    <property type="entry name" value="BIFUNCTIONAL PROTEIN PYRR"/>
    <property type="match status" value="1"/>
</dbReference>
<dbReference type="PANTHER" id="PTHR11608:SF0">
    <property type="entry name" value="BIFUNCTIONAL PROTEIN PYRR"/>
    <property type="match status" value="1"/>
</dbReference>
<dbReference type="Pfam" id="PF00156">
    <property type="entry name" value="Pribosyltran"/>
    <property type="match status" value="1"/>
</dbReference>
<dbReference type="SUPFAM" id="SSF53271">
    <property type="entry name" value="PRTase-like"/>
    <property type="match status" value="1"/>
</dbReference>
<name>PYRR_STAES</name>
<evidence type="ECO:0000250" key="1"/>
<evidence type="ECO:0000255" key="2">
    <source>
        <dbReference type="HAMAP-Rule" id="MF_01219"/>
    </source>
</evidence>
<feature type="chain" id="PRO_0000183059" description="Bifunctional protein PyrR">
    <location>
        <begin position="1"/>
        <end position="175"/>
    </location>
</feature>
<feature type="short sequence motif" description="PRPP-binding" evidence="2">
    <location>
        <begin position="98"/>
        <end position="110"/>
    </location>
</feature>
<feature type="binding site" evidence="1">
    <location>
        <begin position="40"/>
        <end position="41"/>
    </location>
    <ligand>
        <name>substrate</name>
    </ligand>
</feature>
<feature type="binding site" evidence="1">
    <location>
        <begin position="102"/>
        <end position="110"/>
    </location>
    <ligand>
        <name>substrate</name>
    </ligand>
</feature>
<feature type="binding site" evidence="1">
    <location>
        <position position="135"/>
    </location>
    <ligand>
        <name>substrate</name>
    </ligand>
</feature>
<feature type="binding site" evidence="1">
    <location>
        <position position="159"/>
    </location>
    <ligand>
        <name>substrate</name>
    </ligand>
</feature>
<sequence length="175" mass="19720">MSERIILDEAAIQRTITRIAHEILEYNKGTKDLVLLGIKTRGAFLAHRIQDKINSIEQQLVPTGTIDITHFRDDVDKVVQQADQYAFDINVDINNKVVVIIDDVLYTGRTVRASLDAILLHTRPIKIGLAALVDRGHRELPIRADFVGKNIPTARDESVSVYLEEIDDRNAVVIE</sequence>
<protein>
    <recommendedName>
        <fullName evidence="2">Bifunctional protein PyrR</fullName>
    </recommendedName>
    <domain>
        <recommendedName>
            <fullName evidence="2">Pyrimidine operon regulatory protein</fullName>
        </recommendedName>
    </domain>
    <domain>
        <recommendedName>
            <fullName evidence="2">Uracil phosphoribosyltransferase</fullName>
            <shortName evidence="2">UPRTase</shortName>
            <ecNumber evidence="2">2.4.2.9</ecNumber>
        </recommendedName>
    </domain>
</protein>